<comment type="function">
    <text evidence="1">F(1)F(0) ATP synthase produces ATP from ADP in the presence of a proton or sodium gradient. F-type ATPases consist of two structural domains, F(1) containing the extramembraneous catalytic core and F(0) containing the membrane proton channel, linked together by a central stalk and a peripheral stalk. During catalysis, ATP synthesis in the catalytic domain of F(1) is coupled via a rotary mechanism of the central stalk subunits to proton translocation.</text>
</comment>
<comment type="function">
    <text evidence="1">Key component of the F(0) channel; it plays a direct role in translocation across the membrane. A homomeric c-ring of between 10-14 subunits forms the central stalk rotor element with the F(1) delta and epsilon subunits.</text>
</comment>
<comment type="subunit">
    <text evidence="1">F-type ATPases have 2 components, F(1) - the catalytic core - and F(0) - the membrane proton channel. F(1) has five subunits: alpha(3), beta(3), gamma(1), delta(1), epsilon(1). F(0) has four main subunits: a(1), b(1), b'(1) and c(10-14). The alpha and beta chains form an alternating ring which encloses part of the gamma chain. F(1) is attached to F(0) by a central stalk formed by the gamma and epsilon chains, while a peripheral stalk is formed by the delta, b and b' chains.</text>
</comment>
<comment type="subcellular location">
    <subcellularLocation>
        <location evidence="1">Plastid</location>
        <location evidence="1">Chloroplast thylakoid membrane</location>
        <topology evidence="1">Multi-pass membrane protein</topology>
    </subcellularLocation>
</comment>
<comment type="miscellaneous">
    <text>In plastids the F-type ATPase is also known as CF(1)CF(0).</text>
</comment>
<comment type="similarity">
    <text evidence="1">Belongs to the ATPase C chain family.</text>
</comment>
<geneLocation type="chloroplast"/>
<keyword id="KW-0066">ATP synthesis</keyword>
<keyword id="KW-0138">CF(0)</keyword>
<keyword id="KW-0150">Chloroplast</keyword>
<keyword id="KW-0375">Hydrogen ion transport</keyword>
<keyword id="KW-0406">Ion transport</keyword>
<keyword id="KW-0446">Lipid-binding</keyword>
<keyword id="KW-0472">Membrane</keyword>
<keyword id="KW-0934">Plastid</keyword>
<keyword id="KW-1185">Reference proteome</keyword>
<keyword id="KW-0793">Thylakoid</keyword>
<keyword id="KW-0812">Transmembrane</keyword>
<keyword id="KW-1133">Transmembrane helix</keyword>
<keyword id="KW-0813">Transport</keyword>
<evidence type="ECO:0000255" key="1">
    <source>
        <dbReference type="HAMAP-Rule" id="MF_01396"/>
    </source>
</evidence>
<sequence>MNPIISAASVIAAGLAVGLASIGPGVGQGTAAGQAVEGIARQPEAEGKIRGTLLLSLAFMEALTIYGLVVALALLFANPFV</sequence>
<dbReference type="EMBL" id="M18442">
    <property type="protein sequence ID" value="AAB01580.1"/>
    <property type="molecule type" value="Genomic_DNA"/>
</dbReference>
<dbReference type="EMBL" id="DQ317523">
    <property type="protein sequence ID" value="ABC25128.1"/>
    <property type="molecule type" value="Genomic_DNA"/>
</dbReference>
<dbReference type="PIR" id="A29599">
    <property type="entry name" value="A29599"/>
</dbReference>
<dbReference type="RefSeq" id="YP_538768.1">
    <property type="nucleotide sequence ID" value="NC_007942.1"/>
</dbReference>
<dbReference type="SMR" id="P69195"/>
<dbReference type="FunCoup" id="P69195">
    <property type="interactions" value="168"/>
</dbReference>
<dbReference type="STRING" id="3847.P69195"/>
<dbReference type="PaxDb" id="3847-GLYMA05G21346.1"/>
<dbReference type="GeneID" id="3989296"/>
<dbReference type="KEGG" id="gmx:3989296"/>
<dbReference type="eggNOG" id="KOG0232">
    <property type="taxonomic scope" value="Eukaryota"/>
</dbReference>
<dbReference type="InParanoid" id="P69195"/>
<dbReference type="Proteomes" id="UP000008827">
    <property type="component" value="Chloroplast"/>
</dbReference>
<dbReference type="GO" id="GO:0009535">
    <property type="term" value="C:chloroplast thylakoid membrane"/>
    <property type="evidence" value="ECO:0007669"/>
    <property type="project" value="UniProtKB-SubCell"/>
</dbReference>
<dbReference type="GO" id="GO:0045259">
    <property type="term" value="C:proton-transporting ATP synthase complex"/>
    <property type="evidence" value="ECO:0007669"/>
    <property type="project" value="UniProtKB-KW"/>
</dbReference>
<dbReference type="GO" id="GO:0033177">
    <property type="term" value="C:proton-transporting two-sector ATPase complex, proton-transporting domain"/>
    <property type="evidence" value="ECO:0007669"/>
    <property type="project" value="InterPro"/>
</dbReference>
<dbReference type="GO" id="GO:0008289">
    <property type="term" value="F:lipid binding"/>
    <property type="evidence" value="ECO:0007669"/>
    <property type="project" value="UniProtKB-KW"/>
</dbReference>
<dbReference type="GO" id="GO:0046933">
    <property type="term" value="F:proton-transporting ATP synthase activity, rotational mechanism"/>
    <property type="evidence" value="ECO:0007669"/>
    <property type="project" value="UniProtKB-UniRule"/>
</dbReference>
<dbReference type="GO" id="GO:0015986">
    <property type="term" value="P:proton motive force-driven ATP synthesis"/>
    <property type="evidence" value="ECO:0000318"/>
    <property type="project" value="GO_Central"/>
</dbReference>
<dbReference type="CDD" id="cd18183">
    <property type="entry name" value="ATP-synt_Fo_c_ATPH"/>
    <property type="match status" value="1"/>
</dbReference>
<dbReference type="FunFam" id="1.20.20.10:FF:000001">
    <property type="entry name" value="ATP synthase subunit c, chloroplastic"/>
    <property type="match status" value="1"/>
</dbReference>
<dbReference type="Gene3D" id="1.20.20.10">
    <property type="entry name" value="F1F0 ATP synthase subunit C"/>
    <property type="match status" value="1"/>
</dbReference>
<dbReference type="HAMAP" id="MF_01396">
    <property type="entry name" value="ATP_synth_c_bact"/>
    <property type="match status" value="1"/>
</dbReference>
<dbReference type="InterPro" id="IPR005953">
    <property type="entry name" value="ATP_synth_csu_bac/chlpt"/>
</dbReference>
<dbReference type="InterPro" id="IPR000454">
    <property type="entry name" value="ATP_synth_F0_csu"/>
</dbReference>
<dbReference type="InterPro" id="IPR020537">
    <property type="entry name" value="ATP_synth_F0_csu_DDCD_BS"/>
</dbReference>
<dbReference type="InterPro" id="IPR038662">
    <property type="entry name" value="ATP_synth_F0_csu_sf"/>
</dbReference>
<dbReference type="InterPro" id="IPR002379">
    <property type="entry name" value="ATPase_proteolipid_c-like_dom"/>
</dbReference>
<dbReference type="InterPro" id="IPR035921">
    <property type="entry name" value="F/V-ATP_Csub_sf"/>
</dbReference>
<dbReference type="NCBIfam" id="TIGR01260">
    <property type="entry name" value="ATP_synt_c"/>
    <property type="match status" value="1"/>
</dbReference>
<dbReference type="NCBIfam" id="NF005608">
    <property type="entry name" value="PRK07354.1"/>
    <property type="match status" value="1"/>
</dbReference>
<dbReference type="PANTHER" id="PTHR10031">
    <property type="entry name" value="ATP SYNTHASE LIPID-BINDING PROTEIN, MITOCHONDRIAL"/>
    <property type="match status" value="1"/>
</dbReference>
<dbReference type="PANTHER" id="PTHR10031:SF0">
    <property type="entry name" value="ATPASE PROTEIN 9"/>
    <property type="match status" value="1"/>
</dbReference>
<dbReference type="Pfam" id="PF00137">
    <property type="entry name" value="ATP-synt_C"/>
    <property type="match status" value="1"/>
</dbReference>
<dbReference type="PRINTS" id="PR00124">
    <property type="entry name" value="ATPASEC"/>
</dbReference>
<dbReference type="SUPFAM" id="SSF81333">
    <property type="entry name" value="F1F0 ATP synthase subunit C"/>
    <property type="match status" value="1"/>
</dbReference>
<dbReference type="PROSITE" id="PS00605">
    <property type="entry name" value="ATPASE_C"/>
    <property type="match status" value="1"/>
</dbReference>
<feature type="chain" id="PRO_0000112204" description="ATP synthase subunit c, chloroplastic">
    <location>
        <begin position="1"/>
        <end position="81"/>
    </location>
</feature>
<feature type="transmembrane region" description="Helical" evidence="1">
    <location>
        <begin position="3"/>
        <end position="23"/>
    </location>
</feature>
<feature type="transmembrane region" description="Helical" evidence="1">
    <location>
        <begin position="57"/>
        <end position="77"/>
    </location>
</feature>
<feature type="site" description="Reversibly protonated during proton transport" evidence="1">
    <location>
        <position position="61"/>
    </location>
</feature>
<gene>
    <name evidence="1" type="primary">atpH</name>
</gene>
<name>ATPH_SOYBN</name>
<reference key="1">
    <citation type="journal article" date="1987" name="Gene">
        <title>Nucleotide sequence and transcription analysis of the gene coding for subunit III of soybean chloroplast proton-translocating ATPase.</title>
        <authorList>
            <person name="Wintz H."/>
            <person name="Skunca M."/>
            <person name="Pillay D.T.N."/>
        </authorList>
    </citation>
    <scope>NUCLEOTIDE SEQUENCE [GENOMIC DNA]</scope>
    <source>
        <strain>cv. Harcor</strain>
    </source>
</reference>
<reference key="2">
    <citation type="journal article" date="2005" name="Plant Mol. Biol.">
        <title>Complete chloroplast genome sequence of Glycine max and comparative analyses with other legume genomes.</title>
        <authorList>
            <person name="Saski C."/>
            <person name="Lee S.-B."/>
            <person name="Daniell H."/>
            <person name="Wood T.C."/>
            <person name="Tomkins J."/>
            <person name="Kim H.-G."/>
            <person name="Jansen R.K."/>
        </authorList>
    </citation>
    <scope>NUCLEOTIDE SEQUENCE [LARGE SCALE GENOMIC DNA]</scope>
    <source>
        <strain>cv. PI 437654</strain>
    </source>
</reference>
<accession>P69195</accession>
<accession>P12231</accession>
<accession>Q2PMT0</accession>
<protein>
    <recommendedName>
        <fullName evidence="1">ATP synthase subunit c, chloroplastic</fullName>
    </recommendedName>
    <alternativeName>
        <fullName evidence="1">ATP synthase F(0) sector subunit c</fullName>
    </alternativeName>
    <alternativeName>
        <fullName evidence="1">ATPase subunit III</fullName>
    </alternativeName>
    <alternativeName>
        <fullName evidence="1">F-type ATPase subunit c</fullName>
        <shortName evidence="1">F-ATPase subunit c</shortName>
    </alternativeName>
    <alternativeName>
        <fullName evidence="1">Lipid-binding protein</fullName>
    </alternativeName>
</protein>
<proteinExistence type="inferred from homology"/>
<organism>
    <name type="scientific">Glycine max</name>
    <name type="common">Soybean</name>
    <name type="synonym">Glycine hispida</name>
    <dbReference type="NCBI Taxonomy" id="3847"/>
    <lineage>
        <taxon>Eukaryota</taxon>
        <taxon>Viridiplantae</taxon>
        <taxon>Streptophyta</taxon>
        <taxon>Embryophyta</taxon>
        <taxon>Tracheophyta</taxon>
        <taxon>Spermatophyta</taxon>
        <taxon>Magnoliopsida</taxon>
        <taxon>eudicotyledons</taxon>
        <taxon>Gunneridae</taxon>
        <taxon>Pentapetalae</taxon>
        <taxon>rosids</taxon>
        <taxon>fabids</taxon>
        <taxon>Fabales</taxon>
        <taxon>Fabaceae</taxon>
        <taxon>Papilionoideae</taxon>
        <taxon>50 kb inversion clade</taxon>
        <taxon>NPAAA clade</taxon>
        <taxon>indigoferoid/millettioid clade</taxon>
        <taxon>Phaseoleae</taxon>
        <taxon>Glycine</taxon>
        <taxon>Glycine subgen. Soja</taxon>
    </lineage>
</organism>